<keyword id="KW-0001">2Fe-2S</keyword>
<keyword id="KW-0004">4Fe-4S</keyword>
<keyword id="KW-0093">Biotin biosynthesis</keyword>
<keyword id="KW-0408">Iron</keyword>
<keyword id="KW-0411">Iron-sulfur</keyword>
<keyword id="KW-0479">Metal-binding</keyword>
<keyword id="KW-1185">Reference proteome</keyword>
<keyword id="KW-0949">S-adenosyl-L-methionine</keyword>
<keyword id="KW-0808">Transferase</keyword>
<feature type="chain" id="PRO_0000381289" description="Biotin synthase">
    <location>
        <begin position="1"/>
        <end position="278"/>
    </location>
</feature>
<feature type="domain" description="Radical SAM core" evidence="2">
    <location>
        <begin position="1"/>
        <end position="227"/>
    </location>
</feature>
<feature type="binding site" evidence="1">
    <location>
        <position position="16"/>
    </location>
    <ligand>
        <name>[4Fe-4S] cluster</name>
        <dbReference type="ChEBI" id="CHEBI:49883"/>
        <note>4Fe-4S-S-AdoMet</note>
    </ligand>
</feature>
<feature type="binding site" evidence="1">
    <location>
        <position position="20"/>
    </location>
    <ligand>
        <name>[4Fe-4S] cluster</name>
        <dbReference type="ChEBI" id="CHEBI:49883"/>
        <note>4Fe-4S-S-AdoMet</note>
    </ligand>
</feature>
<feature type="binding site" evidence="1">
    <location>
        <position position="23"/>
    </location>
    <ligand>
        <name>[4Fe-4S] cluster</name>
        <dbReference type="ChEBI" id="CHEBI:49883"/>
        <note>4Fe-4S-S-AdoMet</note>
    </ligand>
</feature>
<feature type="binding site" evidence="1">
    <location>
        <position position="60"/>
    </location>
    <ligand>
        <name>[2Fe-2S] cluster</name>
        <dbReference type="ChEBI" id="CHEBI:190135"/>
    </ligand>
</feature>
<feature type="binding site" evidence="1">
    <location>
        <position position="95"/>
    </location>
    <ligand>
        <name>[2Fe-2S] cluster</name>
        <dbReference type="ChEBI" id="CHEBI:190135"/>
    </ligand>
</feature>
<feature type="binding site" evidence="1">
    <location>
        <position position="153"/>
    </location>
    <ligand>
        <name>[2Fe-2S] cluster</name>
        <dbReference type="ChEBI" id="CHEBI:190135"/>
    </ligand>
</feature>
<proteinExistence type="inferred from homology"/>
<organism>
    <name type="scientific">Campylobacter lari (strain RM2100 / D67 / ATCC BAA-1060)</name>
    <dbReference type="NCBI Taxonomy" id="306263"/>
    <lineage>
        <taxon>Bacteria</taxon>
        <taxon>Pseudomonadati</taxon>
        <taxon>Campylobacterota</taxon>
        <taxon>Epsilonproteobacteria</taxon>
        <taxon>Campylobacterales</taxon>
        <taxon>Campylobacteraceae</taxon>
        <taxon>Campylobacter</taxon>
    </lineage>
</organism>
<sequence>MQIMLCAISNIASGGCGEDCKYCTQSAHVKTNINKYKRKDIDQIVLEAKMAKKNEALGFCLVTAGAGLDDEKLEYVCKVAHAVQKEVEGLLLIACNGIANLEQLKELKKAGIFSYNHNLETSKEFFPNICSTHTWEQRFQTNLYAKEVGLMLCCGGIYGLGESEADRKSFRASLKELDPFSSPINFFIPNENLKLKQALLDPDEALNIIKDTKKDLPNAHIMVAGGREVVLKERQYEIFDAGASAIVVGDYLTTKGEEPSKDIQKLKQMGFSFASSCH</sequence>
<name>BIOB_CAMLR</name>
<comment type="function">
    <text evidence="1">Catalyzes the conversion of dethiobiotin (DTB) to biotin by the insertion of a sulfur atom into dethiobiotin via a radical-based mechanism.</text>
</comment>
<comment type="catalytic activity">
    <reaction evidence="1">
        <text>(4R,5S)-dethiobiotin + (sulfur carrier)-SH + 2 reduced [2Fe-2S]-[ferredoxin] + 2 S-adenosyl-L-methionine = (sulfur carrier)-H + biotin + 2 5'-deoxyadenosine + 2 L-methionine + 2 oxidized [2Fe-2S]-[ferredoxin]</text>
        <dbReference type="Rhea" id="RHEA:22060"/>
        <dbReference type="Rhea" id="RHEA-COMP:10000"/>
        <dbReference type="Rhea" id="RHEA-COMP:10001"/>
        <dbReference type="Rhea" id="RHEA-COMP:14737"/>
        <dbReference type="Rhea" id="RHEA-COMP:14739"/>
        <dbReference type="ChEBI" id="CHEBI:17319"/>
        <dbReference type="ChEBI" id="CHEBI:29917"/>
        <dbReference type="ChEBI" id="CHEBI:33737"/>
        <dbReference type="ChEBI" id="CHEBI:33738"/>
        <dbReference type="ChEBI" id="CHEBI:57586"/>
        <dbReference type="ChEBI" id="CHEBI:57844"/>
        <dbReference type="ChEBI" id="CHEBI:59789"/>
        <dbReference type="ChEBI" id="CHEBI:64428"/>
        <dbReference type="ChEBI" id="CHEBI:149473"/>
        <dbReference type="EC" id="2.8.1.6"/>
    </reaction>
</comment>
<comment type="cofactor">
    <cofactor evidence="1">
        <name>[4Fe-4S] cluster</name>
        <dbReference type="ChEBI" id="CHEBI:49883"/>
    </cofactor>
    <text evidence="1">Binds 1 [4Fe-4S] cluster. The cluster is coordinated with 3 cysteines and an exchangeable S-adenosyl-L-methionine.</text>
</comment>
<comment type="cofactor">
    <cofactor evidence="1">
        <name>[2Fe-2S] cluster</name>
        <dbReference type="ChEBI" id="CHEBI:190135"/>
    </cofactor>
    <text evidence="1">Binds 1 [2Fe-2S] cluster. The cluster is coordinated with 3 cysteines and 1 arginine.</text>
</comment>
<comment type="pathway">
    <text evidence="1">Cofactor biosynthesis; biotin biosynthesis; biotin from 7,8-diaminononanoate: step 2/2.</text>
</comment>
<comment type="subunit">
    <text evidence="1">Homodimer.</text>
</comment>
<comment type="similarity">
    <text evidence="1">Belongs to the radical SAM superfamily. Biotin synthase family.</text>
</comment>
<evidence type="ECO:0000255" key="1">
    <source>
        <dbReference type="HAMAP-Rule" id="MF_01694"/>
    </source>
</evidence>
<evidence type="ECO:0000255" key="2">
    <source>
        <dbReference type="PROSITE-ProRule" id="PRU01266"/>
    </source>
</evidence>
<gene>
    <name evidence="1" type="primary">bioB</name>
    <name type="ordered locus">Cla_0160</name>
</gene>
<accession>B9KEN8</accession>
<reference key="1">
    <citation type="journal article" date="2008" name="Foodborne Pathog. Dis.">
        <title>The complete genome sequence and analysis of the human pathogen Campylobacter lari.</title>
        <authorList>
            <person name="Miller W.G."/>
            <person name="Wang G."/>
            <person name="Binnewies T.T."/>
            <person name="Parker C.T."/>
        </authorList>
    </citation>
    <scope>NUCLEOTIDE SEQUENCE [LARGE SCALE GENOMIC DNA]</scope>
    <source>
        <strain>RM2100 / D67 / ATCC BAA-1060</strain>
    </source>
</reference>
<protein>
    <recommendedName>
        <fullName evidence="1">Biotin synthase</fullName>
        <ecNumber evidence="1">2.8.1.6</ecNumber>
    </recommendedName>
</protein>
<dbReference type="EC" id="2.8.1.6" evidence="1"/>
<dbReference type="EMBL" id="CP000932">
    <property type="protein sequence ID" value="ACM63523.1"/>
    <property type="molecule type" value="Genomic_DNA"/>
</dbReference>
<dbReference type="RefSeq" id="WP_012660908.1">
    <property type="nucleotide sequence ID" value="NC_012039.1"/>
</dbReference>
<dbReference type="SMR" id="B9KEN8"/>
<dbReference type="STRING" id="306263.Cla_0160"/>
<dbReference type="KEGG" id="cla:CLA_0160"/>
<dbReference type="PATRIC" id="fig|306263.5.peg.159"/>
<dbReference type="eggNOG" id="COG0502">
    <property type="taxonomic scope" value="Bacteria"/>
</dbReference>
<dbReference type="HOGENOM" id="CLU_033172_2_1_7"/>
<dbReference type="UniPathway" id="UPA00078">
    <property type="reaction ID" value="UER00162"/>
</dbReference>
<dbReference type="Proteomes" id="UP000007727">
    <property type="component" value="Chromosome"/>
</dbReference>
<dbReference type="GO" id="GO:0051537">
    <property type="term" value="F:2 iron, 2 sulfur cluster binding"/>
    <property type="evidence" value="ECO:0007669"/>
    <property type="project" value="UniProtKB-KW"/>
</dbReference>
<dbReference type="GO" id="GO:0051539">
    <property type="term" value="F:4 iron, 4 sulfur cluster binding"/>
    <property type="evidence" value="ECO:0007669"/>
    <property type="project" value="UniProtKB-KW"/>
</dbReference>
<dbReference type="GO" id="GO:0004076">
    <property type="term" value="F:biotin synthase activity"/>
    <property type="evidence" value="ECO:0007669"/>
    <property type="project" value="UniProtKB-UniRule"/>
</dbReference>
<dbReference type="GO" id="GO:0005506">
    <property type="term" value="F:iron ion binding"/>
    <property type="evidence" value="ECO:0007669"/>
    <property type="project" value="UniProtKB-UniRule"/>
</dbReference>
<dbReference type="GO" id="GO:0009102">
    <property type="term" value="P:biotin biosynthetic process"/>
    <property type="evidence" value="ECO:0007669"/>
    <property type="project" value="UniProtKB-UniRule"/>
</dbReference>
<dbReference type="CDD" id="cd01335">
    <property type="entry name" value="Radical_SAM"/>
    <property type="match status" value="1"/>
</dbReference>
<dbReference type="Gene3D" id="3.20.20.70">
    <property type="entry name" value="Aldolase class I"/>
    <property type="match status" value="1"/>
</dbReference>
<dbReference type="HAMAP" id="MF_01694">
    <property type="entry name" value="BioB"/>
    <property type="match status" value="1"/>
</dbReference>
<dbReference type="InterPro" id="IPR013785">
    <property type="entry name" value="Aldolase_TIM"/>
</dbReference>
<dbReference type="InterPro" id="IPR010722">
    <property type="entry name" value="BATS_dom"/>
</dbReference>
<dbReference type="InterPro" id="IPR002684">
    <property type="entry name" value="Biotin_synth/BioAB"/>
</dbReference>
<dbReference type="InterPro" id="IPR024177">
    <property type="entry name" value="Biotin_synthase"/>
</dbReference>
<dbReference type="InterPro" id="IPR006638">
    <property type="entry name" value="Elp3/MiaA/NifB-like_rSAM"/>
</dbReference>
<dbReference type="InterPro" id="IPR007197">
    <property type="entry name" value="rSAM"/>
</dbReference>
<dbReference type="NCBIfam" id="TIGR00433">
    <property type="entry name" value="bioB"/>
    <property type="match status" value="1"/>
</dbReference>
<dbReference type="NCBIfam" id="NF006308">
    <property type="entry name" value="PRK08508.1"/>
    <property type="match status" value="1"/>
</dbReference>
<dbReference type="PANTHER" id="PTHR22976">
    <property type="entry name" value="BIOTIN SYNTHASE"/>
    <property type="match status" value="1"/>
</dbReference>
<dbReference type="PANTHER" id="PTHR22976:SF2">
    <property type="entry name" value="BIOTIN SYNTHASE, MITOCHONDRIAL"/>
    <property type="match status" value="1"/>
</dbReference>
<dbReference type="Pfam" id="PF06968">
    <property type="entry name" value="BATS"/>
    <property type="match status" value="1"/>
</dbReference>
<dbReference type="Pfam" id="PF04055">
    <property type="entry name" value="Radical_SAM"/>
    <property type="match status" value="1"/>
</dbReference>
<dbReference type="PIRSF" id="PIRSF001619">
    <property type="entry name" value="Biotin_synth"/>
    <property type="match status" value="1"/>
</dbReference>
<dbReference type="SFLD" id="SFLDG01060">
    <property type="entry name" value="BATS_domain_containing"/>
    <property type="match status" value="1"/>
</dbReference>
<dbReference type="SFLD" id="SFLDG01278">
    <property type="entry name" value="biotin_synthase_like"/>
    <property type="match status" value="1"/>
</dbReference>
<dbReference type="SMART" id="SM00876">
    <property type="entry name" value="BATS"/>
    <property type="match status" value="1"/>
</dbReference>
<dbReference type="SMART" id="SM00729">
    <property type="entry name" value="Elp3"/>
    <property type="match status" value="1"/>
</dbReference>
<dbReference type="SUPFAM" id="SSF102114">
    <property type="entry name" value="Radical SAM enzymes"/>
    <property type="match status" value="1"/>
</dbReference>
<dbReference type="PROSITE" id="PS51918">
    <property type="entry name" value="RADICAL_SAM"/>
    <property type="match status" value="1"/>
</dbReference>